<proteinExistence type="evidence at protein level"/>
<protein>
    <recommendedName>
        <fullName>Envelopment polyprotein</fullName>
    </recommendedName>
    <alternativeName>
        <fullName>M polyprotein</fullName>
    </alternativeName>
    <component>
        <recommendedName>
            <fullName evidence="3">Glycoprotein N</fullName>
            <shortName>Gn</shortName>
        </recommendedName>
        <alternativeName>
            <fullName>Glycoprotein G1</fullName>
        </alternativeName>
    </component>
    <component>
        <recommendedName>
            <fullName evidence="3">Glycoprotein C</fullName>
            <shortName>Gc</shortName>
        </recommendedName>
        <alternativeName>
            <fullName>Glycoprotein G2</fullName>
        </alternativeName>
    </component>
</protein>
<name>GP_SFTS</name>
<keyword id="KW-0002">3D-structure</keyword>
<keyword id="KW-1015">Disulfide bond</keyword>
<keyword id="KW-1170">Fusion of virus membrane with host endosomal membrane</keyword>
<keyword id="KW-1168">Fusion of virus membrane with host membrane</keyword>
<keyword id="KW-0325">Glycoprotein</keyword>
<keyword id="KW-1038">Host endoplasmic reticulum</keyword>
<keyword id="KW-1040">Host Golgi apparatus</keyword>
<keyword id="KW-1043">Host membrane</keyword>
<keyword id="KW-0945">Host-virus interaction</keyword>
<keyword id="KW-0449">Lipoprotein</keyword>
<keyword id="KW-0472">Membrane</keyword>
<keyword id="KW-0564">Palmitate</keyword>
<keyword id="KW-0732">Signal</keyword>
<keyword id="KW-0812">Transmembrane</keyword>
<keyword id="KW-1133">Transmembrane helix</keyword>
<keyword id="KW-1161">Viral attachment to host cell</keyword>
<keyword id="KW-1234">Viral attachment to host entry receptor</keyword>
<keyword id="KW-1162">Viral penetration into host cytoplasm</keyword>
<keyword id="KW-0946">Virion</keyword>
<keyword id="KW-1160">Virus entry into host cell</keyword>
<organism>
    <name type="scientific">Dabie bandavirus</name>
    <name type="common">Severe fever with thrombocytopenia virus</name>
    <name type="synonym">Huaiyangshan banyangvirus</name>
    <dbReference type="NCBI Taxonomy" id="1003835"/>
    <lineage>
        <taxon>Viruses</taxon>
        <taxon>Riboviria</taxon>
        <taxon>Orthornavirae</taxon>
        <taxon>Negarnaviricota</taxon>
        <taxon>Polyploviricotina</taxon>
        <taxon>Ellioviricetes</taxon>
        <taxon>Bunyavirales</taxon>
        <taxon>Phenuiviridae</taxon>
        <taxon>Bandavirus</taxon>
        <taxon>Bandavirus dabieense</taxon>
    </lineage>
</organism>
<dbReference type="EMBL" id="KC473541">
    <property type="protein sequence ID" value="AGM33042.1"/>
    <property type="molecule type" value="Viral_cRNA"/>
</dbReference>
<dbReference type="EMBL" id="KF887440">
    <property type="protein sequence ID" value="AHK23653.1"/>
    <property type="molecule type" value="Genomic_RNA"/>
</dbReference>
<dbReference type="PDB" id="5G47">
    <property type="method" value="X-ray"/>
    <property type="resolution" value="2.45 A"/>
    <property type="chains" value="A/B/C=563-996"/>
</dbReference>
<dbReference type="PDB" id="5Y10">
    <property type="method" value="X-ray"/>
    <property type="resolution" value="2.60 A"/>
    <property type="chains" value="C=20-340"/>
</dbReference>
<dbReference type="PDB" id="5Y11">
    <property type="method" value="X-ray"/>
    <property type="resolution" value="2.10 A"/>
    <property type="chains" value="C=20-340"/>
</dbReference>
<dbReference type="PDB" id="8WQW">
    <property type="method" value="EM"/>
    <property type="resolution" value="3.27 A"/>
    <property type="chains" value="A=563-995, D=20-340"/>
</dbReference>
<dbReference type="PDB" id="8XK5">
    <property type="method" value="X-ray"/>
    <property type="resolution" value="3.05 A"/>
    <property type="chains" value="E/F/K/L/R=1-340"/>
</dbReference>
<dbReference type="PDB" id="8XK6">
    <property type="method" value="X-ray"/>
    <property type="resolution" value="2.45 A"/>
    <property type="chains" value="A=1-340"/>
</dbReference>
<dbReference type="PDB" id="8XK8">
    <property type="method" value="X-ray"/>
    <property type="resolution" value="3.53 A"/>
    <property type="chains" value="A/B=1-339"/>
</dbReference>
<dbReference type="PDBsum" id="5G47"/>
<dbReference type="PDBsum" id="5Y10"/>
<dbReference type="PDBsum" id="5Y11"/>
<dbReference type="PDBsum" id="8WQW"/>
<dbReference type="PDBsum" id="8XK5"/>
<dbReference type="PDBsum" id="8XK6"/>
<dbReference type="PDBsum" id="8XK8"/>
<dbReference type="EMDB" id="EMD-37756"/>
<dbReference type="SMR" id="R4V2Q5"/>
<dbReference type="iPTMnet" id="R4V2Q5"/>
<dbReference type="ABCD" id="R4V2Q5">
    <property type="antibodies" value="10 sequenced antibodies"/>
</dbReference>
<dbReference type="Proteomes" id="UP000108766">
    <property type="component" value="Genome"/>
</dbReference>
<dbReference type="Proteomes" id="UP000246754">
    <property type="component" value="Genome"/>
</dbReference>
<dbReference type="GO" id="GO:0044167">
    <property type="term" value="C:host cell endoplasmic reticulum membrane"/>
    <property type="evidence" value="ECO:0007669"/>
    <property type="project" value="UniProtKB-SubCell"/>
</dbReference>
<dbReference type="GO" id="GO:0044178">
    <property type="term" value="C:host cell Golgi membrane"/>
    <property type="evidence" value="ECO:0007669"/>
    <property type="project" value="UniProtKB-SubCell"/>
</dbReference>
<dbReference type="GO" id="GO:0016020">
    <property type="term" value="C:membrane"/>
    <property type="evidence" value="ECO:0007669"/>
    <property type="project" value="UniProtKB-KW"/>
</dbReference>
<dbReference type="GO" id="GO:0055036">
    <property type="term" value="C:virion membrane"/>
    <property type="evidence" value="ECO:0007669"/>
    <property type="project" value="UniProtKB-SubCell"/>
</dbReference>
<dbReference type="GO" id="GO:0098670">
    <property type="term" value="P:entry receptor-mediated virion attachment to host cell"/>
    <property type="evidence" value="ECO:0007669"/>
    <property type="project" value="UniProtKB-KW"/>
</dbReference>
<dbReference type="GO" id="GO:0039654">
    <property type="term" value="P:fusion of virus membrane with host endosome membrane"/>
    <property type="evidence" value="ECO:0007669"/>
    <property type="project" value="UniProtKB-KW"/>
</dbReference>
<dbReference type="GO" id="GO:0046718">
    <property type="term" value="P:symbiont entry into host cell"/>
    <property type="evidence" value="ECO:0007669"/>
    <property type="project" value="UniProtKB-KW"/>
</dbReference>
<dbReference type="Gene3D" id="2.60.40.3770">
    <property type="match status" value="1"/>
</dbReference>
<dbReference type="Gene3D" id="2.60.98.50">
    <property type="match status" value="1"/>
</dbReference>
<dbReference type="InterPro" id="IPR043603">
    <property type="entry name" value="Phlebo_G2_C"/>
</dbReference>
<dbReference type="InterPro" id="IPR010826">
    <property type="entry name" value="Phlebovirus_G1"/>
</dbReference>
<dbReference type="InterPro" id="IPR009878">
    <property type="entry name" value="Phlebovirus_G2_fusion"/>
</dbReference>
<dbReference type="Pfam" id="PF19019">
    <property type="entry name" value="Phlebo_G2_C"/>
    <property type="match status" value="1"/>
</dbReference>
<dbReference type="Pfam" id="PF07243">
    <property type="entry name" value="Phlebovirus_G1"/>
    <property type="match status" value="1"/>
</dbReference>
<dbReference type="Pfam" id="PF07245">
    <property type="entry name" value="Phlebovirus_G2"/>
    <property type="match status" value="1"/>
</dbReference>
<accession>R4V2Q5</accession>
<accession>W8GRF8</accession>
<sequence length="1073" mass="116935">MMKVIWFSSLICFVIQCSGDSGPIICAGPIHSNKSADIPHLLGYSEKICQIDRLIHVSSWLRNHSQFQGYVGQRGGRSQVSYYPAENSYSRWSGLLSPCDADWLGMLVVKKAKGSDMIVPGPSYKGKVFFERPTFDGYVGWGCGSGKSRTESGELCSSDSGTSSGLLPSDRVLWIGDVACQPMTPIPEETFLELKSFSQSEFPDICKIDGIVFNQCEGESLPQPFDVAWMDVGHSHKIIMREHKTKWVQESSSKDFVCYKEGTGPCSESEEKTCKTSGSCRGDMQFCKVAGCEHGEEASEAKCRCSLVHKPGEVVVSYGGMRVRPKCYGFSRMMATLEVNQPEQRLGQCTGCHLECINGGVRLITLTSELKSATVCASHFCSSATSGKKSTEIQFHSGSLVGKTAIHVKGALVDGTEFTFEGSCMFPDGCDAVDCTFCREFLKNPQCYPAKKWLFIIIVILLGYAGLMLLTNVLKAIGIWGSWVIAPVKLMFAIIKKLMRTVSCLMRKLMDRGRQVIHEEIGENREGNQDDVRIEMARPRRVRHWMYSPVILTILAIGLAESCDEMVHADSKLVSCRQGSGNMKECVTTGRALLPAVNPGQEACLHFTAPGSPDSKCLKIKVKRINLKCKKSSSYFVPDARSRCTSVRRCRWAGDCQSGCPPHFTSNSFSDDWAGKMDRAGLGFSGCSDGCGGAACGCFNAAPSCIFWRKWVENPHGIIWKVSPCAAWVPSAVIELTMPSGEVRTFHPMSGIPTQVFKGVSVTYLGSDMEVSGLTDLCEIEELKSKKLALAPCNQAGMGVVGKVGEIQCSSEESARTIKKDGCIWNADLVGIELRVDDAVCYSKITSVEAVANYSAIPTTIGGLRFERSHDSQGKISGSPLDITAIRGSFSVNYRGLRLSLSEITATCTGEVTNVSGCYSCMTGAKVSIKLHSSKNSTAHVRCKGDETAFSVLEGVHSYTVSLSFDHAVVDEQCQLNCGGHESQVTLKGNLIFLDVPKFVDGSYMQTYHSTVPTGANIPSPTDWLNALFGNGLSRWILGVIGVLLGGLALFFMIMSLFKLGTKQVFRSRTKLA</sequence>
<feature type="signal peptide" evidence="4">
    <location>
        <begin position="1"/>
        <end position="19"/>
    </location>
</feature>
<feature type="chain" id="PRO_0000455557" description="Envelopment polyprotein">
    <location>
        <begin position="20"/>
        <end position="1073"/>
    </location>
</feature>
<feature type="chain" id="PRO_0000455558" description="Glycoprotein N">
    <location>
        <begin position="20"/>
        <end position="562"/>
    </location>
</feature>
<feature type="chain" id="PRO_0000455559" description="Glycoprotein C">
    <location>
        <begin position="563"/>
        <end position="1073"/>
    </location>
</feature>
<feature type="topological domain" description="Lumenal" evidence="2">
    <location>
        <begin position="20"/>
        <end position="453"/>
    </location>
</feature>
<feature type="transmembrane region" description="Helical" evidence="4">
    <location>
        <begin position="454"/>
        <end position="474"/>
    </location>
</feature>
<feature type="topological domain" description="Cytoplasmic" evidence="2">
    <location>
        <begin position="475"/>
        <end position="535"/>
    </location>
</feature>
<feature type="topological domain" description="Lumenal" evidence="4">
    <location>
        <begin position="563"/>
        <end position="1036"/>
    </location>
</feature>
<feature type="transmembrane region" description="Helical" evidence="4">
    <location>
        <begin position="1037"/>
        <end position="1057"/>
    </location>
</feature>
<feature type="topological domain" description="Cytoplasmic" evidence="2">
    <location>
        <begin position="1058"/>
        <end position="1073"/>
    </location>
</feature>
<feature type="region of interest" description="Golgi retention signal" evidence="2">
    <location>
        <begin position="475"/>
        <end position="521"/>
    </location>
</feature>
<feature type="region of interest" description="Internal signal sequence for glycoprotein C" evidence="1">
    <location>
        <begin position="536"/>
        <end position="562"/>
    </location>
</feature>
<feature type="region of interest" description="Fusion loop" evidence="6">
    <location>
        <begin position="650"/>
        <end position="656"/>
    </location>
</feature>
<feature type="region of interest" description="Fusion loop" evidence="6">
    <location>
        <begin position="691"/>
        <end position="705"/>
    </location>
</feature>
<feature type="site" description="Cleavage; by host signal peptidase" evidence="1">
    <location>
        <begin position="562"/>
        <end position="563"/>
    </location>
</feature>
<feature type="site" description="Important for glycoprotein C and glycoprotein N subcellular location" evidence="2">
    <location>
        <position position="1071"/>
    </location>
</feature>
<feature type="glycosylation site" description="N-linked (GlcNAc...) asparagine; by host" evidence="4">
    <location>
        <position position="33"/>
    </location>
</feature>
<feature type="glycosylation site" description="N-linked (GlcNAc...) asparagine; by host" evidence="4">
    <location>
        <position position="63"/>
    </location>
</feature>
<feature type="glycosylation site" description="N-linked (GlcNAc...) asparagine; by host" evidence="6">
    <location>
        <position position="853"/>
    </location>
</feature>
<feature type="glycosylation site" description="N-linked (GlcNAc...) asparagine; by host" evidence="6">
    <location>
        <position position="914"/>
    </location>
</feature>
<feature type="glycosylation site" description="N-linked (GlcNAc...) asparagine; by host" evidence="6">
    <location>
        <position position="936"/>
    </location>
</feature>
<feature type="disulfide bond" evidence="7">
    <location>
        <begin position="26"/>
        <end position="49"/>
    </location>
</feature>
<feature type="disulfide bond" evidence="7">
    <location>
        <begin position="143"/>
        <end position="156"/>
    </location>
</feature>
<feature type="disulfide bond" evidence="7">
    <location>
        <begin position="180"/>
        <end position="327"/>
    </location>
</feature>
<feature type="disulfide bond" evidence="7">
    <location>
        <begin position="206"/>
        <end position="216"/>
    </location>
</feature>
<feature type="disulfide bond" evidence="7">
    <location>
        <begin position="258"/>
        <end position="305"/>
    </location>
</feature>
<feature type="disulfide bond" evidence="7">
    <location>
        <begin position="266"/>
        <end position="303"/>
    </location>
</feature>
<feature type="disulfide bond" evidence="7">
    <location>
        <begin position="274"/>
        <end position="280"/>
    </location>
</feature>
<feature type="disulfide bond" evidence="7">
    <location>
        <begin position="287"/>
        <end position="292"/>
    </location>
</feature>
<feature type="disulfide bond" evidence="9">
    <location>
        <begin position="349"/>
        <end position="352"/>
    </location>
</feature>
<feature type="disulfide bond" evidence="9">
    <location>
        <begin position="356"/>
        <end position="424"/>
    </location>
</feature>
<feature type="disulfide bond" evidence="9">
    <location>
        <begin position="376"/>
        <end position="381"/>
    </location>
</feature>
<feature type="disulfide bond" evidence="6">
    <location>
        <begin position="563"/>
        <end position="604"/>
    </location>
</feature>
<feature type="disulfide bond" evidence="6">
    <location>
        <begin position="576"/>
        <end position="586"/>
    </location>
</feature>
<feature type="disulfide bond" evidence="6">
    <location>
        <begin position="629"/>
        <end position="725"/>
    </location>
</feature>
<feature type="disulfide bond" evidence="6">
    <location>
        <begin position="644"/>
        <end position="841"/>
    </location>
</feature>
<feature type="disulfide bond" evidence="6">
    <location>
        <begin position="650"/>
        <end position="698"/>
    </location>
</feature>
<feature type="disulfide bond" evidence="6">
    <location>
        <begin position="656"/>
        <end position="705"/>
    </location>
</feature>
<feature type="disulfide bond" evidence="6">
    <location>
        <begin position="660"/>
        <end position="687"/>
    </location>
</feature>
<feature type="disulfide bond" evidence="6">
    <location>
        <begin position="691"/>
        <end position="696"/>
    </location>
</feature>
<feature type="disulfide bond" evidence="6">
    <location>
        <begin position="778"/>
        <end position="793"/>
    </location>
</feature>
<feature type="disulfide bond" evidence="6">
    <location>
        <begin position="809"/>
        <end position="823"/>
    </location>
</feature>
<feature type="disulfide bond" evidence="6">
    <location>
        <begin position="908"/>
        <end position="978"/>
    </location>
</feature>
<feature type="disulfide bond" evidence="6">
    <location>
        <begin position="918"/>
        <end position="921"/>
    </location>
</feature>
<feature type="disulfide bond" evidence="6">
    <location>
        <begin position="943"/>
        <end position="974"/>
    </location>
</feature>
<feature type="sequence variant" description="In strain: LN2012-58." evidence="8">
    <original>EQRL</original>
    <variation>VQRI</variation>
    <location>
        <begin position="343"/>
        <end position="346"/>
    </location>
</feature>
<feature type="sequence variant" description="In strain: LN2012-58." evidence="8">
    <original>M</original>
    <variation>I</variation>
    <location>
        <position position="491"/>
    </location>
</feature>
<feature type="sequence variant" description="In strain: LN2012-58." evidence="8">
    <original>R</original>
    <variation>G</variation>
    <location>
        <position position="507"/>
    </location>
</feature>
<feature type="sequence variant" description="In strain: LN2012-58." evidence="8">
    <original>AI</original>
    <variation>VM</variation>
    <location>
        <begin position="556"/>
        <end position="557"/>
    </location>
</feature>
<feature type="strand" evidence="21">
    <location>
        <begin position="24"/>
        <end position="26"/>
    </location>
</feature>
<feature type="helix" evidence="19">
    <location>
        <begin position="44"/>
        <end position="52"/>
    </location>
</feature>
<feature type="helix" evidence="19">
    <location>
        <begin position="55"/>
        <end position="65"/>
    </location>
</feature>
<feature type="strand" evidence="19">
    <location>
        <begin position="69"/>
        <end position="73"/>
    </location>
</feature>
<feature type="turn" evidence="18">
    <location>
        <begin position="74"/>
        <end position="76"/>
    </location>
</feature>
<feature type="helix" evidence="19">
    <location>
        <begin position="77"/>
        <end position="79"/>
    </location>
</feature>
<feature type="strand" evidence="19">
    <location>
        <begin position="81"/>
        <end position="86"/>
    </location>
</feature>
<feature type="helix" evidence="19">
    <location>
        <begin position="89"/>
        <end position="91"/>
    </location>
</feature>
<feature type="helix" evidence="19">
    <location>
        <begin position="98"/>
        <end position="103"/>
    </location>
</feature>
<feature type="strand" evidence="18">
    <location>
        <begin position="109"/>
        <end position="111"/>
    </location>
</feature>
<feature type="strand" evidence="19">
    <location>
        <begin position="120"/>
        <end position="122"/>
    </location>
</feature>
<feature type="strand" evidence="19">
    <location>
        <begin position="128"/>
        <end position="134"/>
    </location>
</feature>
<feature type="strand" evidence="19">
    <location>
        <begin position="137"/>
        <end position="142"/>
    </location>
</feature>
<feature type="strand" evidence="19">
    <location>
        <begin position="147"/>
        <end position="149"/>
    </location>
</feature>
<feature type="strand" evidence="21">
    <location>
        <begin position="151"/>
        <end position="154"/>
    </location>
</feature>
<feature type="strand" evidence="19">
    <location>
        <begin position="156"/>
        <end position="158"/>
    </location>
</feature>
<feature type="helix" evidence="19">
    <location>
        <begin position="160"/>
        <end position="162"/>
    </location>
</feature>
<feature type="strand" evidence="19">
    <location>
        <begin position="165"/>
        <end position="168"/>
    </location>
</feature>
<feature type="helix" evidence="19">
    <location>
        <begin position="169"/>
        <end position="171"/>
    </location>
</feature>
<feature type="strand" evidence="19">
    <location>
        <begin position="172"/>
        <end position="180"/>
    </location>
</feature>
<feature type="helix" evidence="19">
    <location>
        <begin position="188"/>
        <end position="201"/>
    </location>
</feature>
<feature type="strand" evidence="19">
    <location>
        <begin position="205"/>
        <end position="208"/>
    </location>
</feature>
<feature type="strand" evidence="19">
    <location>
        <begin position="211"/>
        <end position="214"/>
    </location>
</feature>
<feature type="strand" evidence="19">
    <location>
        <begin position="217"/>
        <end position="219"/>
    </location>
</feature>
<feature type="strand" evidence="19">
    <location>
        <begin position="223"/>
        <end position="231"/>
    </location>
</feature>
<feature type="strand" evidence="19">
    <location>
        <begin position="233"/>
        <end position="236"/>
    </location>
</feature>
<feature type="strand" evidence="19">
    <location>
        <begin position="238"/>
        <end position="242"/>
    </location>
</feature>
<feature type="strand" evidence="19">
    <location>
        <begin position="244"/>
        <end position="248"/>
    </location>
</feature>
<feature type="helix" evidence="19">
    <location>
        <begin position="253"/>
        <end position="255"/>
    </location>
</feature>
<feature type="strand" evidence="19">
    <location>
        <begin position="256"/>
        <end position="260"/>
    </location>
</feature>
<feature type="turn" evidence="19">
    <location>
        <begin position="261"/>
        <end position="263"/>
    </location>
</feature>
<feature type="helix" evidence="19">
    <location>
        <begin position="268"/>
        <end position="277"/>
    </location>
</feature>
<feature type="strand" evidence="19">
    <location>
        <begin position="280"/>
        <end position="282"/>
    </location>
</feature>
<feature type="helix" evidence="19">
    <location>
        <begin position="284"/>
        <end position="290"/>
    </location>
</feature>
<feature type="strand" evidence="19">
    <location>
        <begin position="298"/>
        <end position="300"/>
    </location>
</feature>
<feature type="strand" evidence="19">
    <location>
        <begin position="304"/>
        <end position="307"/>
    </location>
</feature>
<feature type="strand" evidence="19">
    <location>
        <begin position="313"/>
        <end position="318"/>
    </location>
</feature>
<feature type="strand" evidence="19">
    <location>
        <begin position="321"/>
        <end position="323"/>
    </location>
</feature>
<feature type="strand" evidence="19">
    <location>
        <begin position="326"/>
        <end position="338"/>
    </location>
</feature>
<feature type="strand" evidence="17">
    <location>
        <begin position="569"/>
        <end position="576"/>
    </location>
</feature>
<feature type="strand" evidence="17">
    <location>
        <begin position="587"/>
        <end position="597"/>
    </location>
</feature>
<feature type="strand" evidence="17">
    <location>
        <begin position="602"/>
        <end position="608"/>
    </location>
</feature>
<feature type="strand" evidence="17">
    <location>
        <begin position="613"/>
        <end position="631"/>
    </location>
</feature>
<feature type="strand" evidence="17">
    <location>
        <begin position="635"/>
        <end position="638"/>
    </location>
</feature>
<feature type="strand" evidence="17">
    <location>
        <begin position="641"/>
        <end position="649"/>
    </location>
</feature>
<feature type="helix" evidence="20">
    <location>
        <begin position="651"/>
        <end position="653"/>
    </location>
</feature>
<feature type="strand" evidence="17">
    <location>
        <begin position="656"/>
        <end position="660"/>
    </location>
</feature>
<feature type="strand" evidence="20">
    <location>
        <begin position="671"/>
        <end position="673"/>
    </location>
</feature>
<feature type="strand" evidence="17">
    <location>
        <begin position="681"/>
        <end position="689"/>
    </location>
</feature>
<feature type="helix" evidence="17">
    <location>
        <begin position="694"/>
        <end position="696"/>
    </location>
</feature>
<feature type="helix" evidence="20">
    <location>
        <begin position="699"/>
        <end position="701"/>
    </location>
</feature>
<feature type="strand" evidence="17">
    <location>
        <begin position="705"/>
        <end position="713"/>
    </location>
</feature>
<feature type="helix" evidence="17">
    <location>
        <begin position="715"/>
        <end position="717"/>
    </location>
</feature>
<feature type="strand" evidence="17">
    <location>
        <begin position="719"/>
        <end position="737"/>
    </location>
</feature>
<feature type="strand" evidence="17">
    <location>
        <begin position="743"/>
        <end position="746"/>
    </location>
</feature>
<feature type="strand" evidence="17">
    <location>
        <begin position="753"/>
        <end position="757"/>
    </location>
</feature>
<feature type="strand" evidence="17">
    <location>
        <begin position="760"/>
        <end position="769"/>
    </location>
</feature>
<feature type="strand" evidence="17">
    <location>
        <begin position="777"/>
        <end position="782"/>
    </location>
</feature>
<feature type="turn" evidence="17">
    <location>
        <begin position="783"/>
        <end position="785"/>
    </location>
</feature>
<feature type="strand" evidence="17">
    <location>
        <begin position="788"/>
        <end position="791"/>
    </location>
</feature>
<feature type="strand" evidence="17">
    <location>
        <begin position="806"/>
        <end position="811"/>
    </location>
</feature>
<feature type="helix" evidence="17">
    <location>
        <begin position="812"/>
        <end position="816"/>
    </location>
</feature>
<feature type="turn" evidence="17">
    <location>
        <begin position="820"/>
        <end position="822"/>
    </location>
</feature>
<feature type="helix" evidence="17">
    <location>
        <begin position="827"/>
        <end position="829"/>
    </location>
</feature>
<feature type="strand" evidence="17">
    <location>
        <begin position="830"/>
        <end position="835"/>
    </location>
</feature>
<feature type="strand" evidence="17">
    <location>
        <begin position="838"/>
        <end position="843"/>
    </location>
</feature>
<feature type="helix" evidence="17">
    <location>
        <begin position="848"/>
        <end position="854"/>
    </location>
</feature>
<feature type="strand" evidence="17">
    <location>
        <begin position="856"/>
        <end position="861"/>
    </location>
</feature>
<feature type="strand" evidence="17">
    <location>
        <begin position="864"/>
        <end position="868"/>
    </location>
</feature>
<feature type="strand" evidence="17">
    <location>
        <begin position="870"/>
        <end position="873"/>
    </location>
</feature>
<feature type="strand" evidence="17">
    <location>
        <begin position="875"/>
        <end position="882"/>
    </location>
</feature>
<feature type="helix" evidence="17">
    <location>
        <begin position="883"/>
        <end position="885"/>
    </location>
</feature>
<feature type="strand" evidence="17">
    <location>
        <begin position="886"/>
        <end position="896"/>
    </location>
</feature>
<feature type="strand" evidence="17">
    <location>
        <begin position="898"/>
        <end position="902"/>
    </location>
</feature>
<feature type="strand" evidence="17">
    <location>
        <begin position="908"/>
        <end position="923"/>
    </location>
</feature>
<feature type="strand" evidence="17">
    <location>
        <begin position="925"/>
        <end position="942"/>
    </location>
</feature>
<feature type="strand" evidence="17">
    <location>
        <begin position="947"/>
        <end position="952"/>
    </location>
</feature>
<feature type="strand" evidence="17">
    <location>
        <begin position="954"/>
        <end position="963"/>
    </location>
</feature>
<feature type="strand" evidence="17">
    <location>
        <begin position="966"/>
        <end position="978"/>
    </location>
</feature>
<feature type="strand" evidence="17">
    <location>
        <begin position="981"/>
        <end position="990"/>
    </location>
</feature>
<evidence type="ECO:0000250" key="1">
    <source>
        <dbReference type="UniProtKB" id="A0A0B5A886"/>
    </source>
</evidence>
<evidence type="ECO:0000250" key="2">
    <source>
        <dbReference type="UniProtKB" id="P09613"/>
    </source>
</evidence>
<evidence type="ECO:0000250" key="3">
    <source>
        <dbReference type="UniProtKB" id="P21401"/>
    </source>
</evidence>
<evidence type="ECO:0000255" key="4"/>
<evidence type="ECO:0000269" key="5">
    <source>
    </source>
</evidence>
<evidence type="ECO:0000269" key="6">
    <source>
    </source>
</evidence>
<evidence type="ECO:0000269" key="7">
    <source>
    </source>
</evidence>
<evidence type="ECO:0000269" key="8">
    <source ref="2"/>
</evidence>
<evidence type="ECO:0000303" key="9">
    <source>
    </source>
</evidence>
<evidence type="ECO:0000305" key="10"/>
<evidence type="ECO:0000312" key="11">
    <source>
        <dbReference type="EMBL" id="AGM33042.1"/>
    </source>
</evidence>
<evidence type="ECO:0000312" key="12">
    <source>
        <dbReference type="EMBL" id="AHK23653.1"/>
    </source>
</evidence>
<evidence type="ECO:0000312" key="13">
    <source>
        <dbReference type="Proteomes" id="UP000246754"/>
    </source>
</evidence>
<evidence type="ECO:0007744" key="14">
    <source>
        <dbReference type="PDB" id="5G47"/>
    </source>
</evidence>
<evidence type="ECO:0007744" key="15">
    <source>
        <dbReference type="PDB" id="5Y10"/>
    </source>
</evidence>
<evidence type="ECO:0007744" key="16">
    <source>
        <dbReference type="PDB" id="5Y11"/>
    </source>
</evidence>
<evidence type="ECO:0007829" key="17">
    <source>
        <dbReference type="PDB" id="5G47"/>
    </source>
</evidence>
<evidence type="ECO:0007829" key="18">
    <source>
        <dbReference type="PDB" id="5Y10"/>
    </source>
</evidence>
<evidence type="ECO:0007829" key="19">
    <source>
        <dbReference type="PDB" id="5Y11"/>
    </source>
</evidence>
<evidence type="ECO:0007829" key="20">
    <source>
        <dbReference type="PDB" id="8WQW"/>
    </source>
</evidence>
<evidence type="ECO:0007829" key="21">
    <source>
        <dbReference type="PDB" id="8XK5"/>
    </source>
</evidence>
<comment type="function">
    <molecule>Glycoprotein N</molecule>
    <text evidence="2 3 5">Structural component of the virion that interacts with glycoprotein C (By similarity). It shields the hydrophobic fusion loops of the glycoprotein C, preventing premature fusion (By similarity). The glycoprotein protrusions are arranged on an icosahedral lattice, with T=12 triangulation (By similarity). They are able to attach the virion to the host cell receptor CD209/DC-SIGN and to promote fusion of membranes with the late endosome after clathrin-mediated endocytosis of the virion (PubMed:23388721). Plays a role in the packaging of ribonucleoproteins during virus assembly (By similarity).</text>
</comment>
<comment type="function">
    <molecule>Glycoprotein C</molecule>
    <text evidence="2 3 5">Structural component of the virion that interacts with glycoprotein N (By similarity). Acts as a class II fusion protein that is activated upon acidification and subsequent repositioning of the glycoprotein N (By similarity). The glycoprotein protrusions are arranged on an icosahedral lattice, with T=12 triangulation (By similarity). They are able to attach the virion to the host cell receptor CD209/DC-SIGN and to promote fusion of membranes with the late endosome after clathrin-mediated endocytosis of the virion (PubMed:23388721).</text>
</comment>
<comment type="subunit">
    <molecule>Glycoprotein N</molecule>
    <text evidence="2 6">Homodimer. Heterodimer with glycoprotein C (By similarity). Homotrimer (postfusion) (PubMed:27325770).</text>
</comment>
<comment type="subunit">
    <molecule>Glycoprotein C</molecule>
    <text evidence="2">Heterodimer with glycoprotein N.</text>
</comment>
<comment type="subcellular location">
    <molecule>Glycoprotein N</molecule>
    <subcellularLocation>
        <location evidence="2">Virion membrane</location>
        <topology evidence="2">Single-pass type I membrane protein</topology>
    </subcellularLocation>
    <subcellularLocation>
        <location evidence="2">Host Golgi apparatus membrane</location>
        <topology evidence="2">Single-pass type I membrane protein</topology>
    </subcellularLocation>
    <subcellularLocation>
        <location evidence="2">Host endoplasmic reticulum membrane</location>
        <topology evidence="2">Single-pass type I membrane protein</topology>
    </subcellularLocation>
    <text evidence="2">Interaction between Glycoprotein N and Glycoprotein C is essential for proper targeting of Glycoprotein C to the Golgi complex, where virion budding occurs.</text>
</comment>
<comment type="subcellular location">
    <molecule>Glycoprotein C</molecule>
    <subcellularLocation>
        <location evidence="2">Virion membrane</location>
        <topology evidence="2">Single-pass type I membrane protein</topology>
    </subcellularLocation>
    <subcellularLocation>
        <location evidence="2">Host Golgi apparatus membrane</location>
        <topology evidence="2">Single-pass type I membrane protein</topology>
    </subcellularLocation>
    <subcellularLocation>
        <location evidence="2">Host endoplasmic reticulum membrane</location>
        <topology evidence="2">Single-pass type I membrane protein</topology>
    </subcellularLocation>
    <text evidence="2">Interaction between Glycoprotein N and Glycoprotein C is essential for proper targeting of Glycoprotein C to the Golgi complex, where virion budding occurs.</text>
</comment>
<comment type="domain">
    <molecule>Glycoprotein N</molecule>
    <text evidence="2">Contains a Golgi retention signal on its C-terminus. The cytoplasmic tail specifically interacts with the ribonucleoproteins and is critical for genome packaging.</text>
</comment>
<comment type="PTM">
    <molecule>Envelopment polyprotein</molecule>
    <text evidence="2">Specific enzymatic cleavages in vivo yield mature proteins including glycoprotein C and glycoprotein N.</text>
</comment>
<comment type="PTM">
    <molecule>Glycoprotein N</molecule>
    <text evidence="2">The cytoplasmic tail is Palmitoylated.</text>
</comment>
<comment type="PTM">
    <molecule>Glycoprotein N</molecule>
    <text evidence="2">Glycosylated.</text>
</comment>
<comment type="PTM">
    <molecule>Glycoprotein C</molecule>
    <text evidence="2">Palmitoylated.</text>
</comment>
<comment type="PTM">
    <molecule>Glycoprotein C</molecule>
    <text evidence="2">Glycosylated.</text>
</comment>
<comment type="similarity">
    <text evidence="10">Belongs to the phlebovirus envelope glycoprotein family.</text>
</comment>
<reference key="1">
    <citation type="submission" date="2013-01" db="EMBL/GenBank/DDBJ databases">
        <title>Biological and genetic characterization of SFTSV isolated from Haemaphysalis longicornis tick in Jiangsu, China.</title>
        <authorList>
            <person name="Wu T."/>
            <person name="Guo X."/>
            <person name="Chen Y."/>
            <person name="Zhao K."/>
            <person name="Ge Y."/>
            <person name="Peng H."/>
            <person name="Cui L."/>
            <person name="Jiao Y."/>
            <person name="Shi Z."/>
            <person name="Tang F."/>
            <person name="Zhou M."/>
        </authorList>
    </citation>
    <scope>NUCLEOTIDE SEQUENCE [GENOMIC DNA]</scope>
    <source>
        <strain evidence="11 13">JS2012-tick01</strain>
    </source>
</reference>
<reference key="2">
    <citation type="submission" date="2013-11" db="EMBL/GenBank/DDBJ databases">
        <title>SFTS virus M segment, complete genome.</title>
        <authorList>
            <person name="Zhang J."/>
            <person name="Yao W."/>
            <person name="Liu Y."/>
            <person name="Wang Z."/>
            <person name="Sun T."/>
            <person name="Tian J."/>
            <person name="Mao L."/>
            <person name="Sun Y."/>
            <person name="Li X."/>
            <person name="Wu W."/>
            <person name="Qi S."/>
            <person name="Li J."/>
            <person name="Liang M."/>
            <person name="Zhao Z."/>
        </authorList>
    </citation>
    <scope>NUCLEOTIDE SEQUENCE [GENOMIC DNA]</scope>
    <source>
        <strain evidence="12">LN2012-58</strain>
    </source>
</reference>
<reference key="3">
    <citation type="journal article" date="2013" name="J. Virol.">
        <title>Severe fever with thrombocytopenia virus glycoproteins are targeted by neutralizing antibodies and can use DC-SIGN as a receptor for pH-dependent entry into human and animal cell lines.</title>
        <authorList>
            <person name="Hofmann H."/>
            <person name="Li X."/>
            <person name="Zhang X."/>
            <person name="Liu W."/>
            <person name="Kuehl A."/>
            <person name="Kaup F."/>
            <person name="Soldan S.S."/>
            <person name="Gonzalez-Scarano F."/>
            <person name="Weber F."/>
            <person name="He Y."/>
            <person name="Poehlmann S."/>
        </authorList>
    </citation>
    <scope>FUNCTION (GLYCOPROTEIN N)</scope>
    <scope>FUNCTION (GLYCOPROTEIN C)</scope>
</reference>
<reference evidence="14" key="4">
    <citation type="journal article" date="2016" name="Proc. Natl. Acad. Sci. U.S.A.">
        <title>Structure of a phleboviral envelope glycoprotein reveals a consolidated model of membrane fusion.</title>
        <authorList>
            <person name="Halldorsson S."/>
            <person name="Behrens A.J."/>
            <person name="Harlos K."/>
            <person name="Huiskonen J.T."/>
            <person name="Elliott R.M."/>
            <person name="Crispin M."/>
            <person name="Brennan B."/>
            <person name="Bowden T.A."/>
        </authorList>
    </citation>
    <scope>X-RAY CRYSTALLOGRAPHY (2.45 ANGSTROMS) OF 563-996</scope>
    <scope>GLYCOSYLATION AT ASN-853; ASN-914 AND ASN-936</scope>
    <scope>SUBUNIT (GLYCOPROTEIN C)</scope>
    <scope>DISULFIDE BONDS</scope>
</reference>
<reference evidence="15 16" key="5">
    <citation type="journal article" date="2017" name="Proc. Natl. Acad. Sci. U.S.A.">
        <title>Structures of phlebovirus glycoprotein Gn and identification of a neutralizing antibody epitope.</title>
        <authorList>
            <person name="Wu Y."/>
            <person name="Zhu Y."/>
            <person name="Gao F."/>
            <person name="Jiao Y."/>
            <person name="Oladejo B.O."/>
            <person name="Chai Y."/>
            <person name="Bi Y."/>
            <person name="Lu S."/>
            <person name="Dong M."/>
            <person name="Zhang C."/>
            <person name="Huang G."/>
            <person name="Wong G."/>
            <person name="Li N."/>
            <person name="Zhang Y."/>
            <person name="Li Y."/>
            <person name="Feng W.H."/>
            <person name="Shi Y."/>
            <person name="Liang M."/>
            <person name="Zhang R."/>
            <person name="Qi J."/>
            <person name="Gao G.F."/>
        </authorList>
    </citation>
    <scope>X-RAY CRYSTALLOGRAPHY (2.10 ANGSTROMS) OF 20-340</scope>
    <scope>DISULFIDE BONDS</scope>
    <scope>SUBUNIT</scope>
</reference>